<keyword id="KW-1003">Cell membrane</keyword>
<keyword id="KW-0472">Membrane</keyword>
<keyword id="KW-0520">NAD</keyword>
<keyword id="KW-0874">Quinone</keyword>
<keyword id="KW-1278">Translocase</keyword>
<keyword id="KW-0813">Transport</keyword>
<gene>
    <name evidence="1" type="primary">nuoD</name>
    <name type="ordered locus">Cbei_2993</name>
</gene>
<feature type="chain" id="PRO_0000371852" description="NADH-quinone oxidoreductase subunit D">
    <location>
        <begin position="1"/>
        <end position="370"/>
    </location>
</feature>
<evidence type="ECO:0000255" key="1">
    <source>
        <dbReference type="HAMAP-Rule" id="MF_01358"/>
    </source>
</evidence>
<dbReference type="EC" id="7.1.1.-" evidence="1"/>
<dbReference type="EMBL" id="CP000721">
    <property type="protein sequence ID" value="ABR35132.1"/>
    <property type="molecule type" value="Genomic_DNA"/>
</dbReference>
<dbReference type="RefSeq" id="WP_012059185.1">
    <property type="nucleotide sequence ID" value="NC_009617.1"/>
</dbReference>
<dbReference type="SMR" id="A6LXQ2"/>
<dbReference type="KEGG" id="cbe:Cbei_2993"/>
<dbReference type="eggNOG" id="COG0649">
    <property type="taxonomic scope" value="Bacteria"/>
</dbReference>
<dbReference type="HOGENOM" id="CLU_015134_1_2_9"/>
<dbReference type="Proteomes" id="UP000000565">
    <property type="component" value="Chromosome"/>
</dbReference>
<dbReference type="GO" id="GO:0005886">
    <property type="term" value="C:plasma membrane"/>
    <property type="evidence" value="ECO:0007669"/>
    <property type="project" value="UniProtKB-SubCell"/>
</dbReference>
<dbReference type="GO" id="GO:0051287">
    <property type="term" value="F:NAD binding"/>
    <property type="evidence" value="ECO:0007669"/>
    <property type="project" value="InterPro"/>
</dbReference>
<dbReference type="GO" id="GO:0050136">
    <property type="term" value="F:NADH:ubiquinone reductase (non-electrogenic) activity"/>
    <property type="evidence" value="ECO:0007669"/>
    <property type="project" value="UniProtKB-UniRule"/>
</dbReference>
<dbReference type="GO" id="GO:0048038">
    <property type="term" value="F:quinone binding"/>
    <property type="evidence" value="ECO:0007669"/>
    <property type="project" value="UniProtKB-KW"/>
</dbReference>
<dbReference type="Gene3D" id="1.10.645.10">
    <property type="entry name" value="Cytochrome-c3 Hydrogenase, chain B"/>
    <property type="match status" value="1"/>
</dbReference>
<dbReference type="HAMAP" id="MF_01358">
    <property type="entry name" value="NDH1_NuoD"/>
    <property type="match status" value="1"/>
</dbReference>
<dbReference type="InterPro" id="IPR001135">
    <property type="entry name" value="NADH_Q_OxRdtase_suD"/>
</dbReference>
<dbReference type="InterPro" id="IPR014029">
    <property type="entry name" value="NADH_UbQ_OxRdtase_49kDa_CS"/>
</dbReference>
<dbReference type="InterPro" id="IPR022885">
    <property type="entry name" value="NDH1_su_D/H"/>
</dbReference>
<dbReference type="InterPro" id="IPR029014">
    <property type="entry name" value="NiFe-Hase_large"/>
</dbReference>
<dbReference type="NCBIfam" id="NF004739">
    <property type="entry name" value="PRK06075.1"/>
    <property type="match status" value="1"/>
</dbReference>
<dbReference type="NCBIfam" id="NF008974">
    <property type="entry name" value="PRK12322.1"/>
    <property type="match status" value="1"/>
</dbReference>
<dbReference type="PANTHER" id="PTHR11993:SF10">
    <property type="entry name" value="NADH DEHYDROGENASE [UBIQUINONE] IRON-SULFUR PROTEIN 2, MITOCHONDRIAL"/>
    <property type="match status" value="1"/>
</dbReference>
<dbReference type="PANTHER" id="PTHR11993">
    <property type="entry name" value="NADH-UBIQUINONE OXIDOREDUCTASE 49 KDA SUBUNIT"/>
    <property type="match status" value="1"/>
</dbReference>
<dbReference type="Pfam" id="PF00346">
    <property type="entry name" value="Complex1_49kDa"/>
    <property type="match status" value="2"/>
</dbReference>
<dbReference type="SUPFAM" id="SSF56762">
    <property type="entry name" value="HydB/Nqo4-like"/>
    <property type="match status" value="1"/>
</dbReference>
<dbReference type="PROSITE" id="PS00535">
    <property type="entry name" value="COMPLEX1_49K"/>
    <property type="match status" value="1"/>
</dbReference>
<sequence>MEYDRELHTEEMTLNFGPQHPSTHGVYRAIFTLDGEHIVNVENIIGYLHRGMEKLAESRTYTQFIPYTDRLDYLSGMLNELGYVQTVEKLAGIEVPERAEYIRIIMAELQRIASHQVFLGSMALDLNGHTPWMYFFRDREKVLDLLEMVCGSRMTTNYMRIGGVSYDLPEEFMPSLKSFLNDMDKSFIEYERIITGNEIFQARTKGVGIISGEKALAYGLTGPNLRASGIDLDLRRDAPYGIYDRFNFKVIVGKDGDCYERWIMRIDEMEESIKIIKQALEQIKEGPVLAKVPRLIKPPKGDIYHQIEGAKGVLGYYIVSDGCDKPYRIHIHGPSFVNIGAFPEMATGSTIQDAVAILASLDPILGEIDR</sequence>
<protein>
    <recommendedName>
        <fullName evidence="1">NADH-quinone oxidoreductase subunit D</fullName>
        <ecNumber evidence="1">7.1.1.-</ecNumber>
    </recommendedName>
    <alternativeName>
        <fullName evidence="1">NADH dehydrogenase I subunit D</fullName>
    </alternativeName>
    <alternativeName>
        <fullName evidence="1">NDH-1 subunit D</fullName>
    </alternativeName>
</protein>
<reference key="1">
    <citation type="submission" date="2007-06" db="EMBL/GenBank/DDBJ databases">
        <title>Complete sequence of Clostridium beijerinckii NCIMB 8052.</title>
        <authorList>
            <consortium name="US DOE Joint Genome Institute"/>
            <person name="Copeland A."/>
            <person name="Lucas S."/>
            <person name="Lapidus A."/>
            <person name="Barry K."/>
            <person name="Detter J.C."/>
            <person name="Glavina del Rio T."/>
            <person name="Hammon N."/>
            <person name="Israni S."/>
            <person name="Dalin E."/>
            <person name="Tice H."/>
            <person name="Pitluck S."/>
            <person name="Sims D."/>
            <person name="Brettin T."/>
            <person name="Bruce D."/>
            <person name="Tapia R."/>
            <person name="Brainard J."/>
            <person name="Schmutz J."/>
            <person name="Larimer F."/>
            <person name="Land M."/>
            <person name="Hauser L."/>
            <person name="Kyrpides N."/>
            <person name="Mikhailova N."/>
            <person name="Bennet G."/>
            <person name="Cann I."/>
            <person name="Chen J.-S."/>
            <person name="Contreras A.L."/>
            <person name="Jones D."/>
            <person name="Kashket E."/>
            <person name="Mitchell W."/>
            <person name="Stoddard S."/>
            <person name="Schwarz W."/>
            <person name="Qureshi N."/>
            <person name="Young M."/>
            <person name="Shi Z."/>
            <person name="Ezeji T."/>
            <person name="White B."/>
            <person name="Blaschek H."/>
            <person name="Richardson P."/>
        </authorList>
    </citation>
    <scope>NUCLEOTIDE SEQUENCE [LARGE SCALE GENOMIC DNA]</scope>
    <source>
        <strain>ATCC 51743 / NCIMB 8052</strain>
    </source>
</reference>
<comment type="function">
    <text evidence="1">NDH-1 shuttles electrons from NADH, via FMN and iron-sulfur (Fe-S) centers, to quinones in the respiratory chain. The immediate electron acceptor for the enzyme in this species is believed to be a menaquinone. Couples the redox reaction to proton translocation (for every two electrons transferred, four hydrogen ions are translocated across the cytoplasmic membrane), and thus conserves the redox energy in a proton gradient.</text>
</comment>
<comment type="catalytic activity">
    <reaction evidence="1">
        <text>a quinone + NADH + 5 H(+)(in) = a quinol + NAD(+) + 4 H(+)(out)</text>
        <dbReference type="Rhea" id="RHEA:57888"/>
        <dbReference type="ChEBI" id="CHEBI:15378"/>
        <dbReference type="ChEBI" id="CHEBI:24646"/>
        <dbReference type="ChEBI" id="CHEBI:57540"/>
        <dbReference type="ChEBI" id="CHEBI:57945"/>
        <dbReference type="ChEBI" id="CHEBI:132124"/>
    </reaction>
</comment>
<comment type="subunit">
    <text evidence="1">NDH-1 is composed of 14 different subunits. Subunits NuoB, C, D, E, F, and G constitute the peripheral sector of the complex.</text>
</comment>
<comment type="subcellular location">
    <subcellularLocation>
        <location evidence="1">Cell membrane</location>
        <topology evidence="1">Peripheral membrane protein</topology>
        <orientation evidence="1">Cytoplasmic side</orientation>
    </subcellularLocation>
</comment>
<comment type="similarity">
    <text evidence="1">Belongs to the complex I 49 kDa subunit family.</text>
</comment>
<name>NUOD_CLOB8</name>
<accession>A6LXQ2</accession>
<proteinExistence type="inferred from homology"/>
<organism>
    <name type="scientific">Clostridium beijerinckii (strain ATCC 51743 / NCIMB 8052)</name>
    <name type="common">Clostridium acetobutylicum</name>
    <dbReference type="NCBI Taxonomy" id="290402"/>
    <lineage>
        <taxon>Bacteria</taxon>
        <taxon>Bacillati</taxon>
        <taxon>Bacillota</taxon>
        <taxon>Clostridia</taxon>
        <taxon>Eubacteriales</taxon>
        <taxon>Clostridiaceae</taxon>
        <taxon>Clostridium</taxon>
    </lineage>
</organism>